<organism>
    <name type="scientific">Schizosaccharomyces pombe (strain 972 / ATCC 24843)</name>
    <name type="common">Fission yeast</name>
    <dbReference type="NCBI Taxonomy" id="284812"/>
    <lineage>
        <taxon>Eukaryota</taxon>
        <taxon>Fungi</taxon>
        <taxon>Dikarya</taxon>
        <taxon>Ascomycota</taxon>
        <taxon>Taphrinomycotina</taxon>
        <taxon>Schizosaccharomycetes</taxon>
        <taxon>Schizosaccharomycetales</taxon>
        <taxon>Schizosaccharomycetaceae</taxon>
        <taxon>Schizosaccharomyces</taxon>
    </lineage>
</organism>
<sequence>MDDISATTIQTNHQDLVNDVTYDFYGRRMVSCSADQRVKVYDFNDDTETWAITSEWRAGDASLMRVAWAHPSFGQVLAVCSLDRGVRIYEEQKKNFESKTWVEVAKLMDARSAVLDISFCPFQHGCKLAAVSADATLRIYEAMEPGNLTYWTLMNEIALMPSPPSRNEQPAFCVNWCPSRWREQYIAVGCMNDAYIYKQNSHGKWKKVAELPGHTDLIRDICWAPSMGSSYYLIATACKDGNVRIFKVETLCEEVFQEEEDAGNSMTEDSNFNLNSLKVELIGEYDNHKCQVWRCRFNVTGTILSSSGDDGCVRLWKASYANLFKCISVVSLEKKPEKL</sequence>
<name>SEH1_SCHPO</name>
<accession>Q10099</accession>
<protein>
    <recommendedName>
        <fullName>Nucleoporin seh1</fullName>
    </recommendedName>
    <alternativeName>
        <fullName>Nuclear pore protein seh1</fullName>
    </alternativeName>
</protein>
<proteinExistence type="evidence at protein level"/>
<gene>
    <name type="primary">seh1</name>
    <name type="ORF">SPAC15F9.02</name>
</gene>
<dbReference type="EMBL" id="CU329670">
    <property type="protein sequence ID" value="CAA92379.1"/>
    <property type="molecule type" value="Genomic_DNA"/>
</dbReference>
<dbReference type="PIR" id="T37727">
    <property type="entry name" value="T37727"/>
</dbReference>
<dbReference type="RefSeq" id="NP_593751.1">
    <property type="nucleotide sequence ID" value="NM_001019182.2"/>
</dbReference>
<dbReference type="SMR" id="Q10099"/>
<dbReference type="BioGRID" id="278178">
    <property type="interactions" value="34"/>
</dbReference>
<dbReference type="FunCoup" id="Q10099">
    <property type="interactions" value="779"/>
</dbReference>
<dbReference type="IntAct" id="Q10099">
    <property type="interactions" value="3"/>
</dbReference>
<dbReference type="STRING" id="284812.Q10099"/>
<dbReference type="iPTMnet" id="Q10099"/>
<dbReference type="PaxDb" id="4896-SPAC15F9.02.1"/>
<dbReference type="EnsemblFungi" id="SPAC15F9.02.1">
    <property type="protein sequence ID" value="SPAC15F9.02.1:pep"/>
    <property type="gene ID" value="SPAC15F9.02"/>
</dbReference>
<dbReference type="GeneID" id="2541682"/>
<dbReference type="KEGG" id="spo:2541682"/>
<dbReference type="PomBase" id="SPAC15F9.02">
    <property type="gene designation" value="seh1"/>
</dbReference>
<dbReference type="VEuPathDB" id="FungiDB:SPAC15F9.02"/>
<dbReference type="eggNOG" id="KOG2445">
    <property type="taxonomic scope" value="Eukaryota"/>
</dbReference>
<dbReference type="HOGENOM" id="CLU_032441_1_1_1"/>
<dbReference type="InParanoid" id="Q10099"/>
<dbReference type="OMA" id="NAPTRRW"/>
<dbReference type="PhylomeDB" id="Q10099"/>
<dbReference type="Reactome" id="R-SPO-159227">
    <property type="pathway name" value="Transport of the SLBP independent Mature mRNA"/>
</dbReference>
<dbReference type="Reactome" id="R-SPO-159231">
    <property type="pathway name" value="Transport of Mature mRNA Derived from an Intronless Transcript"/>
</dbReference>
<dbReference type="Reactome" id="R-SPO-159236">
    <property type="pathway name" value="Transport of Mature mRNA derived from an Intron-Containing Transcript"/>
</dbReference>
<dbReference type="Reactome" id="R-SPO-3371453">
    <property type="pathway name" value="Regulation of HSF1-mediated heat shock response"/>
</dbReference>
<dbReference type="Reactome" id="R-SPO-4085377">
    <property type="pathway name" value="SUMOylation of SUMOylation proteins"/>
</dbReference>
<dbReference type="Reactome" id="R-SPO-4551638">
    <property type="pathway name" value="SUMOylation of chromatin organization proteins"/>
</dbReference>
<dbReference type="Reactome" id="R-SPO-4570464">
    <property type="pathway name" value="SUMOylation of RNA binding proteins"/>
</dbReference>
<dbReference type="Reactome" id="R-SPO-5578749">
    <property type="pathway name" value="Transcriptional regulation by small RNAs"/>
</dbReference>
<dbReference type="Reactome" id="R-SPO-9615933">
    <property type="pathway name" value="Postmitotic nuclear pore complex (NPC) reformation"/>
</dbReference>
<dbReference type="PRO" id="PR:Q10099"/>
<dbReference type="Proteomes" id="UP000002485">
    <property type="component" value="Chromosome I"/>
</dbReference>
<dbReference type="GO" id="GO:0005829">
    <property type="term" value="C:cytosol"/>
    <property type="evidence" value="ECO:0007005"/>
    <property type="project" value="PomBase"/>
</dbReference>
<dbReference type="GO" id="GO:0061700">
    <property type="term" value="C:GATOR2 complex"/>
    <property type="evidence" value="ECO:0000353"/>
    <property type="project" value="PomBase"/>
</dbReference>
<dbReference type="GO" id="GO:0034399">
    <property type="term" value="C:nuclear periphery"/>
    <property type="evidence" value="ECO:0000314"/>
    <property type="project" value="PomBase"/>
</dbReference>
<dbReference type="GO" id="GO:0005643">
    <property type="term" value="C:nuclear pore"/>
    <property type="evidence" value="ECO:0000314"/>
    <property type="project" value="PomBase"/>
</dbReference>
<dbReference type="GO" id="GO:0031080">
    <property type="term" value="C:nuclear pore outer ring"/>
    <property type="evidence" value="ECO:0000314"/>
    <property type="project" value="PomBase"/>
</dbReference>
<dbReference type="GO" id="GO:0005634">
    <property type="term" value="C:nucleus"/>
    <property type="evidence" value="ECO:0007005"/>
    <property type="project" value="PomBase"/>
</dbReference>
<dbReference type="GO" id="GO:0035859">
    <property type="term" value="C:Seh1-associated complex"/>
    <property type="evidence" value="ECO:0000318"/>
    <property type="project" value="GO_Central"/>
</dbReference>
<dbReference type="GO" id="GO:0005774">
    <property type="term" value="C:vacuolar membrane"/>
    <property type="evidence" value="ECO:0000269"/>
    <property type="project" value="PomBase"/>
</dbReference>
<dbReference type="GO" id="GO:0005198">
    <property type="term" value="F:structural molecule activity"/>
    <property type="evidence" value="ECO:0007669"/>
    <property type="project" value="InterPro"/>
</dbReference>
<dbReference type="GO" id="GO:0034198">
    <property type="term" value="P:cellular response to amino acid starvation"/>
    <property type="evidence" value="ECO:0000318"/>
    <property type="project" value="GO_Central"/>
</dbReference>
<dbReference type="GO" id="GO:0051028">
    <property type="term" value="P:mRNA transport"/>
    <property type="evidence" value="ECO:0007669"/>
    <property type="project" value="UniProtKB-KW"/>
</dbReference>
<dbReference type="GO" id="GO:1904263">
    <property type="term" value="P:positive regulation of TORC1 signaling"/>
    <property type="evidence" value="ECO:0000318"/>
    <property type="project" value="GO_Central"/>
</dbReference>
<dbReference type="GO" id="GO:0015031">
    <property type="term" value="P:protein transport"/>
    <property type="evidence" value="ECO:0007669"/>
    <property type="project" value="UniProtKB-KW"/>
</dbReference>
<dbReference type="FunFam" id="2.130.10.10:FF:000578">
    <property type="entry name" value="Nucleoporin seh1"/>
    <property type="match status" value="1"/>
</dbReference>
<dbReference type="Gene3D" id="2.130.10.10">
    <property type="entry name" value="YVTN repeat-like/Quinoprotein amine dehydrogenase"/>
    <property type="match status" value="1"/>
</dbReference>
<dbReference type="InterPro" id="IPR037363">
    <property type="entry name" value="Sec13/Seh1_fam"/>
</dbReference>
<dbReference type="InterPro" id="IPR015943">
    <property type="entry name" value="WD40/YVTN_repeat-like_dom_sf"/>
</dbReference>
<dbReference type="InterPro" id="IPR036322">
    <property type="entry name" value="WD40_repeat_dom_sf"/>
</dbReference>
<dbReference type="InterPro" id="IPR001680">
    <property type="entry name" value="WD40_rpt"/>
</dbReference>
<dbReference type="PANTHER" id="PTHR11024">
    <property type="entry name" value="NUCLEAR PORE COMPLEX PROTEIN SEC13 / SEH1 FAMILY MEMBER"/>
    <property type="match status" value="1"/>
</dbReference>
<dbReference type="PANTHER" id="PTHR11024:SF3">
    <property type="entry name" value="NUCLEOPORIN SEH1"/>
    <property type="match status" value="1"/>
</dbReference>
<dbReference type="Pfam" id="PF00400">
    <property type="entry name" value="WD40"/>
    <property type="match status" value="3"/>
</dbReference>
<dbReference type="SMART" id="SM00320">
    <property type="entry name" value="WD40"/>
    <property type="match status" value="5"/>
</dbReference>
<dbReference type="SUPFAM" id="SSF50978">
    <property type="entry name" value="WD40 repeat-like"/>
    <property type="match status" value="1"/>
</dbReference>
<dbReference type="PROSITE" id="PS50082">
    <property type="entry name" value="WD_REPEATS_2"/>
    <property type="match status" value="2"/>
</dbReference>
<dbReference type="PROSITE" id="PS50294">
    <property type="entry name" value="WD_REPEATS_REGION"/>
    <property type="match status" value="2"/>
</dbReference>
<evidence type="ECO:0000269" key="1">
    <source>
    </source>
</evidence>
<evidence type="ECO:0000269" key="2">
    <source>
    </source>
</evidence>
<evidence type="ECO:0000305" key="3"/>
<reference key="1">
    <citation type="journal article" date="2002" name="Nature">
        <title>The genome sequence of Schizosaccharomyces pombe.</title>
        <authorList>
            <person name="Wood V."/>
            <person name="Gwilliam R."/>
            <person name="Rajandream M.A."/>
            <person name="Lyne M.H."/>
            <person name="Lyne R."/>
            <person name="Stewart A."/>
            <person name="Sgouros J.G."/>
            <person name="Peat N."/>
            <person name="Hayles J."/>
            <person name="Baker S.G."/>
            <person name="Basham D."/>
            <person name="Bowman S."/>
            <person name="Brooks K."/>
            <person name="Brown D."/>
            <person name="Brown S."/>
            <person name="Chillingworth T."/>
            <person name="Churcher C.M."/>
            <person name="Collins M."/>
            <person name="Connor R."/>
            <person name="Cronin A."/>
            <person name="Davis P."/>
            <person name="Feltwell T."/>
            <person name="Fraser A."/>
            <person name="Gentles S."/>
            <person name="Goble A."/>
            <person name="Hamlin N."/>
            <person name="Harris D.E."/>
            <person name="Hidalgo J."/>
            <person name="Hodgson G."/>
            <person name="Holroyd S."/>
            <person name="Hornsby T."/>
            <person name="Howarth S."/>
            <person name="Huckle E.J."/>
            <person name="Hunt S."/>
            <person name="Jagels K."/>
            <person name="James K.D."/>
            <person name="Jones L."/>
            <person name="Jones M."/>
            <person name="Leather S."/>
            <person name="McDonald S."/>
            <person name="McLean J."/>
            <person name="Mooney P."/>
            <person name="Moule S."/>
            <person name="Mungall K.L."/>
            <person name="Murphy L.D."/>
            <person name="Niblett D."/>
            <person name="Odell C."/>
            <person name="Oliver K."/>
            <person name="O'Neil S."/>
            <person name="Pearson D."/>
            <person name="Quail M.A."/>
            <person name="Rabbinowitsch E."/>
            <person name="Rutherford K.M."/>
            <person name="Rutter S."/>
            <person name="Saunders D."/>
            <person name="Seeger K."/>
            <person name="Sharp S."/>
            <person name="Skelton J."/>
            <person name="Simmonds M.N."/>
            <person name="Squares R."/>
            <person name="Squares S."/>
            <person name="Stevens K."/>
            <person name="Taylor K."/>
            <person name="Taylor R.G."/>
            <person name="Tivey A."/>
            <person name="Walsh S.V."/>
            <person name="Warren T."/>
            <person name="Whitehead S."/>
            <person name="Woodward J.R."/>
            <person name="Volckaert G."/>
            <person name="Aert R."/>
            <person name="Robben J."/>
            <person name="Grymonprez B."/>
            <person name="Weltjens I."/>
            <person name="Vanstreels E."/>
            <person name="Rieger M."/>
            <person name="Schaefer M."/>
            <person name="Mueller-Auer S."/>
            <person name="Gabel C."/>
            <person name="Fuchs M."/>
            <person name="Duesterhoeft A."/>
            <person name="Fritzc C."/>
            <person name="Holzer E."/>
            <person name="Moestl D."/>
            <person name="Hilbert H."/>
            <person name="Borzym K."/>
            <person name="Langer I."/>
            <person name="Beck A."/>
            <person name="Lehrach H."/>
            <person name="Reinhardt R."/>
            <person name="Pohl T.M."/>
            <person name="Eger P."/>
            <person name="Zimmermann W."/>
            <person name="Wedler H."/>
            <person name="Wambutt R."/>
            <person name="Purnelle B."/>
            <person name="Goffeau A."/>
            <person name="Cadieu E."/>
            <person name="Dreano S."/>
            <person name="Gloux S."/>
            <person name="Lelaure V."/>
            <person name="Mottier S."/>
            <person name="Galibert F."/>
            <person name="Aves S.J."/>
            <person name="Xiang Z."/>
            <person name="Hunt C."/>
            <person name="Moore K."/>
            <person name="Hurst S.M."/>
            <person name="Lucas M."/>
            <person name="Rochet M."/>
            <person name="Gaillardin C."/>
            <person name="Tallada V.A."/>
            <person name="Garzon A."/>
            <person name="Thode G."/>
            <person name="Daga R.R."/>
            <person name="Cruzado L."/>
            <person name="Jimenez J."/>
            <person name="Sanchez M."/>
            <person name="del Rey F."/>
            <person name="Benito J."/>
            <person name="Dominguez A."/>
            <person name="Revuelta J.L."/>
            <person name="Moreno S."/>
            <person name="Armstrong J."/>
            <person name="Forsburg S.L."/>
            <person name="Cerutti L."/>
            <person name="Lowe T."/>
            <person name="McCombie W.R."/>
            <person name="Paulsen I."/>
            <person name="Potashkin J."/>
            <person name="Shpakovski G.V."/>
            <person name="Ussery D."/>
            <person name="Barrell B.G."/>
            <person name="Nurse P."/>
        </authorList>
    </citation>
    <scope>NUCLEOTIDE SEQUENCE [LARGE SCALE GENOMIC DNA]</scope>
    <source>
        <strain>972 / ATCC 24843</strain>
    </source>
</reference>
<reference key="2">
    <citation type="journal article" date="2004" name="Mol. Cell. Biol.">
        <title>The fission yeast Nup107-120 complex functionally interacts with the small GTPase Ran/Spi1 and is required for mRNA export, nuclear pore distribution, and proper cell division.</title>
        <authorList>
            <person name="Bai S.W."/>
            <person name="Rouquette J."/>
            <person name="Umeda M."/>
            <person name="Faigle W."/>
            <person name="Loew D."/>
            <person name="Sazer S."/>
            <person name="Doye V."/>
        </authorList>
    </citation>
    <scope>IDENTIFICATION IN NUP107-120 COMPLEX</scope>
    <scope>SUBCELLULAR LOCATION</scope>
</reference>
<reference key="3">
    <citation type="journal article" date="2004" name="Yeast">
        <title>Identification of genes encoding putative nucleoporins and transport factors in the fission yeast Schizosaccharomyces pombe: a deletion analysis.</title>
        <authorList>
            <person name="Chen X.Q."/>
            <person name="Du X."/>
            <person name="Liu J."/>
            <person name="Balasubramanian M.K."/>
            <person name="Balasundaram D."/>
        </authorList>
    </citation>
    <scope>FUNCTION</scope>
    <scope>SUBCELLULAR LOCATION</scope>
</reference>
<reference key="4">
    <citation type="journal article" date="2006" name="Nat. Biotechnol.">
        <title>ORFeome cloning and global analysis of protein localization in the fission yeast Schizosaccharomyces pombe.</title>
        <authorList>
            <person name="Matsuyama A."/>
            <person name="Arai R."/>
            <person name="Yashiroda Y."/>
            <person name="Shirai A."/>
            <person name="Kamata A."/>
            <person name="Sekido S."/>
            <person name="Kobayashi Y."/>
            <person name="Hashimoto A."/>
            <person name="Hamamoto M."/>
            <person name="Hiraoka Y."/>
            <person name="Horinouchi S."/>
            <person name="Yoshida M."/>
        </authorList>
    </citation>
    <scope>SUBCELLULAR LOCATION [LARGE SCALE ANALYSIS]</scope>
</reference>
<feature type="chain" id="PRO_0000051214" description="Nucleoporin seh1">
    <location>
        <begin position="1"/>
        <end position="339"/>
    </location>
</feature>
<feature type="repeat" description="WD 1">
    <location>
        <begin position="12"/>
        <end position="51"/>
    </location>
</feature>
<feature type="repeat" description="WD 2">
    <location>
        <begin position="58"/>
        <end position="99"/>
    </location>
</feature>
<feature type="repeat" description="WD 3">
    <location>
        <begin position="109"/>
        <end position="150"/>
    </location>
</feature>
<feature type="repeat" description="WD 4">
    <location>
        <begin position="166"/>
        <end position="209"/>
    </location>
</feature>
<feature type="repeat" description="WD 5">
    <location>
        <begin position="213"/>
        <end position="256"/>
    </location>
</feature>
<feature type="repeat" description="WD 6">
    <location>
        <begin position="287"/>
        <end position="326"/>
    </location>
</feature>
<keyword id="KW-0963">Cytoplasm</keyword>
<keyword id="KW-0509">mRNA transport</keyword>
<keyword id="KW-0906">Nuclear pore complex</keyword>
<keyword id="KW-0539">Nucleus</keyword>
<keyword id="KW-0653">Protein transport</keyword>
<keyword id="KW-1185">Reference proteome</keyword>
<keyword id="KW-0677">Repeat</keyword>
<keyword id="KW-0811">Translocation</keyword>
<keyword id="KW-0813">Transport</keyword>
<keyword id="KW-0853">WD repeat</keyword>
<comment type="function">
    <text evidence="1">Functions as a component of the nuclear pore complex (NPC). NPC components, collectively referred to as nucleoporins (NUPs), can play the role of both NPC structural components and of docking or interaction partners for transiently associated nuclear transport factors. Active directional transport is assured by both, a Phe-Gly (FG) repeat affinity gradient for these transport factors across the NPC and a transport cofactor concentration gradient across the nuclear envelope.</text>
</comment>
<comment type="subunit">
    <text evidence="2">Component of the nuclear pore complex (NPC). NPC constitutes the exclusive means of nucleocytoplasmic transport. NPCs allow the passive diffusion of ions and small molecules and the active, nuclear transport receptor-mediated bidirectional transport of macromolecules such as proteins, RNAs, ribonucleoparticles (RNPs), and ribosomal subunits across the nuclear envelope. Due to its 8-fold rotational symmetry, all subunits are present with 8 copies or multiples thereof. Component of the npc107-120 complex which consists of nup85, nup107, nup120, nup131, nup132 and seh1.</text>
</comment>
<comment type="subcellular location">
    <subcellularLocation>
        <location>Cytoplasm</location>
    </subcellularLocation>
    <subcellularLocation>
        <location>Nucleus</location>
        <location>Nuclear pore complex</location>
    </subcellularLocation>
</comment>
<comment type="similarity">
    <text evidence="3">Belongs to the WD repeat SEC13 family.</text>
</comment>